<gene>
    <name evidence="1" type="primary">glnE</name>
    <name type="ordered locus">YPO0653</name>
    <name type="ordered locus">y3525</name>
    <name type="ordered locus">YP_2968</name>
</gene>
<organism>
    <name type="scientific">Yersinia pestis</name>
    <dbReference type="NCBI Taxonomy" id="632"/>
    <lineage>
        <taxon>Bacteria</taxon>
        <taxon>Pseudomonadati</taxon>
        <taxon>Pseudomonadota</taxon>
        <taxon>Gammaproteobacteria</taxon>
        <taxon>Enterobacterales</taxon>
        <taxon>Yersiniaceae</taxon>
        <taxon>Yersinia</taxon>
    </lineage>
</organism>
<proteinExistence type="inferred from homology"/>
<dbReference type="EC" id="2.7.7.89" evidence="1"/>
<dbReference type="EC" id="2.7.7.42" evidence="1"/>
<dbReference type="EMBL" id="AL590842">
    <property type="protein sequence ID" value="CAL19330.1"/>
    <property type="molecule type" value="Genomic_DNA"/>
</dbReference>
<dbReference type="EMBL" id="AE009952">
    <property type="protein sequence ID" value="AAM87073.1"/>
    <property type="status" value="ALT_INIT"/>
    <property type="molecule type" value="Genomic_DNA"/>
</dbReference>
<dbReference type="EMBL" id="AE017042">
    <property type="protein sequence ID" value="AAS63147.1"/>
    <property type="status" value="ALT_INIT"/>
    <property type="molecule type" value="Genomic_DNA"/>
</dbReference>
<dbReference type="PIR" id="AH0080">
    <property type="entry name" value="AH0080"/>
</dbReference>
<dbReference type="RefSeq" id="WP_002212194.1">
    <property type="nucleotide sequence ID" value="NZ_WUCM01000022.1"/>
</dbReference>
<dbReference type="RefSeq" id="YP_002345721.1">
    <property type="nucleotide sequence ID" value="NC_003143.1"/>
</dbReference>
<dbReference type="SMR" id="Q8ZI61"/>
<dbReference type="IntAct" id="Q8ZI61">
    <property type="interactions" value="4"/>
</dbReference>
<dbReference type="STRING" id="214092.YPO0653"/>
<dbReference type="PaxDb" id="214092-YPO0653"/>
<dbReference type="EnsemblBacteria" id="AAS63147">
    <property type="protein sequence ID" value="AAS63147"/>
    <property type="gene ID" value="YP_2968"/>
</dbReference>
<dbReference type="GeneID" id="57973971"/>
<dbReference type="KEGG" id="ype:YPO0653"/>
<dbReference type="KEGG" id="ypk:y3525"/>
<dbReference type="KEGG" id="ypm:YP_2968"/>
<dbReference type="PATRIC" id="fig|214092.21.peg.912"/>
<dbReference type="eggNOG" id="COG1391">
    <property type="taxonomic scope" value="Bacteria"/>
</dbReference>
<dbReference type="HOGENOM" id="CLU_006233_0_1_6"/>
<dbReference type="OMA" id="EFMVQYA"/>
<dbReference type="OrthoDB" id="9759366at2"/>
<dbReference type="Proteomes" id="UP000000815">
    <property type="component" value="Chromosome"/>
</dbReference>
<dbReference type="Proteomes" id="UP000001019">
    <property type="component" value="Chromosome"/>
</dbReference>
<dbReference type="Proteomes" id="UP000002490">
    <property type="component" value="Chromosome"/>
</dbReference>
<dbReference type="GO" id="GO:0005829">
    <property type="term" value="C:cytosol"/>
    <property type="evidence" value="ECO:0000318"/>
    <property type="project" value="GO_Central"/>
</dbReference>
<dbReference type="GO" id="GO:0008882">
    <property type="term" value="F:[glutamate-ammonia-ligase] adenylyltransferase activity"/>
    <property type="evidence" value="ECO:0000318"/>
    <property type="project" value="GO_Central"/>
</dbReference>
<dbReference type="GO" id="GO:0047388">
    <property type="term" value="F:[glutamine synthetase]-adenylyl-L-tyrosine phosphorylase activity"/>
    <property type="evidence" value="ECO:0007669"/>
    <property type="project" value="UniProtKB-EC"/>
</dbReference>
<dbReference type="GO" id="GO:0005524">
    <property type="term" value="F:ATP binding"/>
    <property type="evidence" value="ECO:0007669"/>
    <property type="project" value="UniProtKB-UniRule"/>
</dbReference>
<dbReference type="GO" id="GO:0000287">
    <property type="term" value="F:magnesium ion binding"/>
    <property type="evidence" value="ECO:0007669"/>
    <property type="project" value="UniProtKB-UniRule"/>
</dbReference>
<dbReference type="GO" id="GO:0000820">
    <property type="term" value="P:regulation of glutamine family amino acid metabolic process"/>
    <property type="evidence" value="ECO:0000318"/>
    <property type="project" value="GO_Central"/>
</dbReference>
<dbReference type="CDD" id="cd05401">
    <property type="entry name" value="NT_GlnE_GlnD_like"/>
    <property type="match status" value="2"/>
</dbReference>
<dbReference type="FunFam" id="1.10.4050.10:FF:000001">
    <property type="entry name" value="Bifunctional glutamine synthetase adenylyltransferase/adenylyl-removing enzyme"/>
    <property type="match status" value="1"/>
</dbReference>
<dbReference type="FunFam" id="1.20.120.1510:FF:000001">
    <property type="entry name" value="Bifunctional glutamine synthetase adenylyltransferase/adenylyl-removing enzyme"/>
    <property type="match status" value="1"/>
</dbReference>
<dbReference type="FunFam" id="1.20.120.330:FF:000005">
    <property type="entry name" value="Bifunctional glutamine synthetase adenylyltransferase/adenylyl-removing enzyme"/>
    <property type="match status" value="1"/>
</dbReference>
<dbReference type="FunFam" id="1.20.120.330:FF:000008">
    <property type="entry name" value="Bifunctional glutamine synthetase adenylyltransferase/adenylyl-removing enzyme"/>
    <property type="match status" value="1"/>
</dbReference>
<dbReference type="FunFam" id="3.30.460.10:FF:000009">
    <property type="entry name" value="Bifunctional glutamine synthetase adenylyltransferase/adenylyl-removing enzyme"/>
    <property type="match status" value="1"/>
</dbReference>
<dbReference type="FunFam" id="3.30.460.10:FF:000014">
    <property type="entry name" value="Bifunctional glutamine synthetase adenylyltransferase/adenylyl-removing enzyme"/>
    <property type="match status" value="1"/>
</dbReference>
<dbReference type="Gene3D" id="1.20.120.1510">
    <property type="match status" value="1"/>
</dbReference>
<dbReference type="Gene3D" id="3.30.460.10">
    <property type="entry name" value="Beta Polymerase, domain 2"/>
    <property type="match status" value="2"/>
</dbReference>
<dbReference type="Gene3D" id="1.10.4050.10">
    <property type="entry name" value="Glutamine synthase adenylyltransferase GlnE"/>
    <property type="match status" value="1"/>
</dbReference>
<dbReference type="Gene3D" id="1.20.120.330">
    <property type="entry name" value="Nucleotidyltransferases domain 2"/>
    <property type="match status" value="2"/>
</dbReference>
<dbReference type="HAMAP" id="MF_00802">
    <property type="entry name" value="GlnE"/>
    <property type="match status" value="1"/>
</dbReference>
<dbReference type="InterPro" id="IPR023057">
    <property type="entry name" value="GlnE"/>
</dbReference>
<dbReference type="InterPro" id="IPR005190">
    <property type="entry name" value="GlnE_rpt_dom"/>
</dbReference>
<dbReference type="InterPro" id="IPR043519">
    <property type="entry name" value="NT_sf"/>
</dbReference>
<dbReference type="InterPro" id="IPR013546">
    <property type="entry name" value="PII_UdlTrfase/GS_AdlTrfase"/>
</dbReference>
<dbReference type="NCBIfam" id="NF008292">
    <property type="entry name" value="PRK11072.1"/>
    <property type="match status" value="1"/>
</dbReference>
<dbReference type="PANTHER" id="PTHR30621:SF0">
    <property type="entry name" value="BIFUNCTIONAL GLUTAMINE SYNTHETASE ADENYLYLTRANSFERASE_ADENYLYL-REMOVING ENZYME"/>
    <property type="match status" value="1"/>
</dbReference>
<dbReference type="PANTHER" id="PTHR30621">
    <property type="entry name" value="GLUTAMINE SYNTHETASE ADENYLYLTRANSFERASE"/>
    <property type="match status" value="1"/>
</dbReference>
<dbReference type="Pfam" id="PF08335">
    <property type="entry name" value="GlnD_UR_UTase"/>
    <property type="match status" value="2"/>
</dbReference>
<dbReference type="Pfam" id="PF03710">
    <property type="entry name" value="GlnE"/>
    <property type="match status" value="2"/>
</dbReference>
<dbReference type="SUPFAM" id="SSF81301">
    <property type="entry name" value="Nucleotidyltransferase"/>
    <property type="match status" value="2"/>
</dbReference>
<dbReference type="SUPFAM" id="SSF81593">
    <property type="entry name" value="Nucleotidyltransferase substrate binding subunit/domain"/>
    <property type="match status" value="2"/>
</dbReference>
<keyword id="KW-0067">ATP-binding</keyword>
<keyword id="KW-0460">Magnesium</keyword>
<keyword id="KW-0511">Multifunctional enzyme</keyword>
<keyword id="KW-0547">Nucleotide-binding</keyword>
<keyword id="KW-0548">Nucleotidyltransferase</keyword>
<keyword id="KW-1185">Reference proteome</keyword>
<keyword id="KW-0808">Transferase</keyword>
<sequence length="951" mass="108330">MLPLPSELQIQAQSIKQRFSELPAPPDLRDEDIAVLALSDFVSDMLLIHPQWLEELHQQPPQPQEWQYYSQWLSQALAGVQDEAALLTALRLFRRRVMVRIAWSQVLQTSGTAETLQQLSTLAESMIIAARDWLYQVCCRELGTPCNRQGVPQPLLILGMGKLGGGELNFSSDIDLIFAYPENGQTQGGRRELDNAQFFTRLGQRLIKALDQHTIDGFVYRVDMRLRPFGDSGPLVLSFAALEDYYQEQGRDWERYAMVKARLMGGADDPYSQELRQMLRPFVFRRYIDFSVIQSLRNMKGMIAREVRRRGLKDNIKLGAGGIREIEFITQVFQLIRGGREPRLQERALLPTLQAVAELGLLPEQQVADLSGSYLFLRRLENLLQAIADEQTQTLPNDPLNQARLAWGMGYADWAAMSTALENHMQAVRVVFDDLIGDETPDIGEDPSHGLYKSLWQDVLEESDLAPLTPHLEEAARRQLLATISGFRHDVDKRTIGPRGREVLDQLMPRLFAEVCPRPDANVALSRLILLLLSIVTRTTYLELLVEYHAALKHVIRLCSASPMVASQLARYPLLLDELLDPQSLYQPLAPSAYRDELRQYLLRVPEDDEEQQLEALRQFKQAQQLRIAAGDITEALPVMKVSDHLTYLAEAIIDAVIQQAWNQMVARYGQPSHLQQSEGRGFAVIGYGKLGGWELGYSSDLDLVFLLDCPLDVMTDGDRSIDGRQFYLRLAQRIMHLFSTRTSSGILYEVDARLRPSGEAGMLVSTIEAFADYQRNEAWTWEHQALVRARIVYGSPKLHQQFDAIRQQILCRHREDPQLQQEVREMREKMRNHLGSKQRDIFDIKADAGGITDIEFIAQYLVLRYAASEPRLTRWSDNVRIFESMAHYDIMSPEEAAALTRAYVTMRDEIHHLALQEQSSKVAADSFIAEREQVAASWHKWLAANDANVS</sequence>
<name>GLNE_YERPE</name>
<feature type="chain" id="PRO_0000209287" description="Bifunctional glutamine synthetase adenylyltransferase/adenylyl-removing enzyme">
    <location>
        <begin position="1"/>
        <end position="951"/>
    </location>
</feature>
<feature type="region of interest" description="Adenylyl removase" evidence="1">
    <location>
        <begin position="1"/>
        <end position="440"/>
    </location>
</feature>
<feature type="region of interest" description="Adenylyl transferase" evidence="1">
    <location>
        <begin position="449"/>
        <end position="951"/>
    </location>
</feature>
<protein>
    <recommendedName>
        <fullName evidence="1">Bifunctional glutamine synthetase adenylyltransferase/adenylyl-removing enzyme</fullName>
    </recommendedName>
    <alternativeName>
        <fullName evidence="1">ATP:glutamine synthetase adenylyltransferase</fullName>
    </alternativeName>
    <alternativeName>
        <fullName evidence="1">ATase</fullName>
    </alternativeName>
    <domain>
        <recommendedName>
            <fullName evidence="1">Glutamine synthetase adenylyl-L-tyrosine phosphorylase</fullName>
            <ecNumber evidence="1">2.7.7.89</ecNumber>
        </recommendedName>
        <alternativeName>
            <fullName evidence="1">Adenylyl removase</fullName>
            <shortName evidence="1">AR</shortName>
            <shortName evidence="1">AT-N</shortName>
        </alternativeName>
    </domain>
    <domain>
        <recommendedName>
            <fullName evidence="1">Glutamine synthetase adenylyl transferase</fullName>
            <ecNumber evidence="1">2.7.7.42</ecNumber>
        </recommendedName>
        <alternativeName>
            <fullName evidence="1">Adenylyl transferase</fullName>
            <shortName evidence="1">AT</shortName>
            <shortName evidence="1">AT-C</shortName>
        </alternativeName>
    </domain>
</protein>
<comment type="function">
    <text evidence="1">Involved in the regulation of glutamine synthetase GlnA, a key enzyme in the process to assimilate ammonia. When cellular nitrogen levels are high, the C-terminal adenylyl transferase (AT) inactivates GlnA by covalent transfer of an adenylyl group from ATP to specific tyrosine residue of GlnA, thus reducing its activity. Conversely, when nitrogen levels are low, the N-terminal adenylyl removase (AR) activates GlnA by removing the adenylyl group by phosphorolysis, increasing its activity. The regulatory region of GlnE binds the signal transduction protein PII (GlnB) which indicates the nitrogen status of the cell.</text>
</comment>
<comment type="catalytic activity">
    <reaction evidence="1">
        <text>[glutamine synthetase]-O(4)-(5'-adenylyl)-L-tyrosine + phosphate = [glutamine synthetase]-L-tyrosine + ADP</text>
        <dbReference type="Rhea" id="RHEA:43716"/>
        <dbReference type="Rhea" id="RHEA-COMP:10660"/>
        <dbReference type="Rhea" id="RHEA-COMP:10661"/>
        <dbReference type="ChEBI" id="CHEBI:43474"/>
        <dbReference type="ChEBI" id="CHEBI:46858"/>
        <dbReference type="ChEBI" id="CHEBI:83624"/>
        <dbReference type="ChEBI" id="CHEBI:456216"/>
        <dbReference type="EC" id="2.7.7.89"/>
    </reaction>
</comment>
<comment type="catalytic activity">
    <reaction evidence="1">
        <text>[glutamine synthetase]-L-tyrosine + ATP = [glutamine synthetase]-O(4)-(5'-adenylyl)-L-tyrosine + diphosphate</text>
        <dbReference type="Rhea" id="RHEA:18589"/>
        <dbReference type="Rhea" id="RHEA-COMP:10660"/>
        <dbReference type="Rhea" id="RHEA-COMP:10661"/>
        <dbReference type="ChEBI" id="CHEBI:30616"/>
        <dbReference type="ChEBI" id="CHEBI:33019"/>
        <dbReference type="ChEBI" id="CHEBI:46858"/>
        <dbReference type="ChEBI" id="CHEBI:83624"/>
        <dbReference type="EC" id="2.7.7.42"/>
    </reaction>
</comment>
<comment type="cofactor">
    <cofactor evidence="1">
        <name>Mg(2+)</name>
        <dbReference type="ChEBI" id="CHEBI:18420"/>
    </cofactor>
</comment>
<comment type="similarity">
    <text evidence="1">Belongs to the GlnE family.</text>
</comment>
<comment type="sequence caution" evidence="2">
    <conflict type="erroneous initiation">
        <sequence resource="EMBL-CDS" id="AAM87073"/>
    </conflict>
</comment>
<comment type="sequence caution" evidence="2">
    <conflict type="erroneous initiation">
        <sequence resource="EMBL-CDS" id="AAS63147"/>
    </conflict>
</comment>
<reference key="1">
    <citation type="journal article" date="2001" name="Nature">
        <title>Genome sequence of Yersinia pestis, the causative agent of plague.</title>
        <authorList>
            <person name="Parkhill J."/>
            <person name="Wren B.W."/>
            <person name="Thomson N.R."/>
            <person name="Titball R.W."/>
            <person name="Holden M.T.G."/>
            <person name="Prentice M.B."/>
            <person name="Sebaihia M."/>
            <person name="James K.D."/>
            <person name="Churcher C.M."/>
            <person name="Mungall K.L."/>
            <person name="Baker S."/>
            <person name="Basham D."/>
            <person name="Bentley S.D."/>
            <person name="Brooks K."/>
            <person name="Cerdeno-Tarraga A.-M."/>
            <person name="Chillingworth T."/>
            <person name="Cronin A."/>
            <person name="Davies R.M."/>
            <person name="Davis P."/>
            <person name="Dougan G."/>
            <person name="Feltwell T."/>
            <person name="Hamlin N."/>
            <person name="Holroyd S."/>
            <person name="Jagels K."/>
            <person name="Karlyshev A.V."/>
            <person name="Leather S."/>
            <person name="Moule S."/>
            <person name="Oyston P.C.F."/>
            <person name="Quail M.A."/>
            <person name="Rutherford K.M."/>
            <person name="Simmonds M."/>
            <person name="Skelton J."/>
            <person name="Stevens K."/>
            <person name="Whitehead S."/>
            <person name="Barrell B.G."/>
        </authorList>
    </citation>
    <scope>NUCLEOTIDE SEQUENCE [LARGE SCALE GENOMIC DNA]</scope>
    <source>
        <strain>CO-92 / Biovar Orientalis</strain>
    </source>
</reference>
<reference key="2">
    <citation type="journal article" date="2002" name="J. Bacteriol.">
        <title>Genome sequence of Yersinia pestis KIM.</title>
        <authorList>
            <person name="Deng W."/>
            <person name="Burland V."/>
            <person name="Plunkett G. III"/>
            <person name="Boutin A."/>
            <person name="Mayhew G.F."/>
            <person name="Liss P."/>
            <person name="Perna N.T."/>
            <person name="Rose D.J."/>
            <person name="Mau B."/>
            <person name="Zhou S."/>
            <person name="Schwartz D.C."/>
            <person name="Fetherston J.D."/>
            <person name="Lindler L.E."/>
            <person name="Brubaker R.R."/>
            <person name="Plano G.V."/>
            <person name="Straley S.C."/>
            <person name="McDonough K.A."/>
            <person name="Nilles M.L."/>
            <person name="Matson J.S."/>
            <person name="Blattner F.R."/>
            <person name="Perry R.D."/>
        </authorList>
    </citation>
    <scope>NUCLEOTIDE SEQUENCE [LARGE SCALE GENOMIC DNA]</scope>
    <source>
        <strain>KIM10+ / Biovar Mediaevalis</strain>
    </source>
</reference>
<reference key="3">
    <citation type="journal article" date="2004" name="DNA Res.">
        <title>Complete genome sequence of Yersinia pestis strain 91001, an isolate avirulent to humans.</title>
        <authorList>
            <person name="Song Y."/>
            <person name="Tong Z."/>
            <person name="Wang J."/>
            <person name="Wang L."/>
            <person name="Guo Z."/>
            <person name="Han Y."/>
            <person name="Zhang J."/>
            <person name="Pei D."/>
            <person name="Zhou D."/>
            <person name="Qin H."/>
            <person name="Pang X."/>
            <person name="Han Y."/>
            <person name="Zhai J."/>
            <person name="Li M."/>
            <person name="Cui B."/>
            <person name="Qi Z."/>
            <person name="Jin L."/>
            <person name="Dai R."/>
            <person name="Chen F."/>
            <person name="Li S."/>
            <person name="Ye C."/>
            <person name="Du Z."/>
            <person name="Lin W."/>
            <person name="Wang J."/>
            <person name="Yu J."/>
            <person name="Yang H."/>
            <person name="Wang J."/>
            <person name="Huang P."/>
            <person name="Yang R."/>
        </authorList>
    </citation>
    <scope>NUCLEOTIDE SEQUENCE [LARGE SCALE GENOMIC DNA]</scope>
    <source>
        <strain>91001 / Biovar Mediaevalis</strain>
    </source>
</reference>
<accession>Q8ZI61</accession>
<accession>Q0WJ17</accession>
<accession>Q74RQ4</accession>
<accession>Q8CZR9</accession>
<evidence type="ECO:0000255" key="1">
    <source>
        <dbReference type="HAMAP-Rule" id="MF_00802"/>
    </source>
</evidence>
<evidence type="ECO:0000305" key="2"/>